<name>CSGA_ECO57</name>
<reference key="1">
    <citation type="journal article" date="2001" name="Appl. Environ. Microbiol.">
        <title>Mutations in the csgD promoter associated with variations in curli expression in certain strains of Escherichia coli O157:H7.</title>
        <authorList>
            <person name="Uhlich G.A."/>
            <person name="Keen J.E."/>
            <person name="Elder R.O."/>
        </authorList>
    </citation>
    <scope>NUCLEOTIDE SEQUENCE [GENOMIC DNA]</scope>
    <source>
        <strain>O157:H7 / ATCC 43895 / CDC EDL 933 / EHEC</strain>
    </source>
</reference>
<reference key="2">
    <citation type="journal article" date="2001" name="Nature">
        <title>Genome sequence of enterohaemorrhagic Escherichia coli O157:H7.</title>
        <authorList>
            <person name="Perna N.T."/>
            <person name="Plunkett G. III"/>
            <person name="Burland V."/>
            <person name="Mau B."/>
            <person name="Glasner J.D."/>
            <person name="Rose D.J."/>
            <person name="Mayhew G.F."/>
            <person name="Evans P.S."/>
            <person name="Gregor J."/>
            <person name="Kirkpatrick H.A."/>
            <person name="Posfai G."/>
            <person name="Hackett J."/>
            <person name="Klink S."/>
            <person name="Boutin A."/>
            <person name="Shao Y."/>
            <person name="Miller L."/>
            <person name="Grotbeck E.J."/>
            <person name="Davis N.W."/>
            <person name="Lim A."/>
            <person name="Dimalanta E.T."/>
            <person name="Potamousis K."/>
            <person name="Apodaca J."/>
            <person name="Anantharaman T.S."/>
            <person name="Lin J."/>
            <person name="Yen G."/>
            <person name="Schwartz D.C."/>
            <person name="Welch R.A."/>
            <person name="Blattner F.R."/>
        </authorList>
    </citation>
    <scope>NUCLEOTIDE SEQUENCE [LARGE SCALE GENOMIC DNA]</scope>
    <source>
        <strain>O157:H7 / EDL933 / ATCC 700927 / EHEC</strain>
    </source>
</reference>
<reference key="3">
    <citation type="journal article" date="2001" name="DNA Res.">
        <title>Complete genome sequence of enterohemorrhagic Escherichia coli O157:H7 and genomic comparison with a laboratory strain K-12.</title>
        <authorList>
            <person name="Hayashi T."/>
            <person name="Makino K."/>
            <person name="Ohnishi M."/>
            <person name="Kurokawa K."/>
            <person name="Ishii K."/>
            <person name="Yokoyama K."/>
            <person name="Han C.-G."/>
            <person name="Ohtsubo E."/>
            <person name="Nakayama K."/>
            <person name="Murata T."/>
            <person name="Tanaka M."/>
            <person name="Tobe T."/>
            <person name="Iida T."/>
            <person name="Takami H."/>
            <person name="Honda T."/>
            <person name="Sasakawa C."/>
            <person name="Ogasawara N."/>
            <person name="Yasunaga T."/>
            <person name="Kuhara S."/>
            <person name="Shiba T."/>
            <person name="Hattori M."/>
            <person name="Shinagawa H."/>
        </authorList>
    </citation>
    <scope>NUCLEOTIDE SEQUENCE [LARGE SCALE GENOMIC DNA]</scope>
    <source>
        <strain>O157:H7 / Sakai / RIMD 0509952 / EHEC</strain>
    </source>
</reference>
<proteinExistence type="inferred from homology"/>
<comment type="function">
    <text>Curlin is the structural subunit of the curli. Curli are coiled surface structures that assemble preferentially at growth temperatures below 37 degrees Celsius. Curli can bind to fibronectin.</text>
</comment>
<comment type="subcellular location">
    <subcellularLocation>
        <location>Fimbrium</location>
    </subcellularLocation>
    <text>Part of the curli surface structure.</text>
</comment>
<comment type="similarity">
    <text evidence="2">Belongs to the CsgA/CsgB family.</text>
</comment>
<feature type="signal peptide" evidence="1">
    <location>
        <begin position="1"/>
        <end position="20"/>
    </location>
</feature>
<feature type="chain" id="PRO_0000006370" description="Major curlin subunit">
    <location>
        <begin position="21"/>
        <end position="152"/>
    </location>
</feature>
<sequence length="152" mass="15099">MKLLKVAAIAAIVFSGSALAGVVPQYGGGGGNHGGGGNNSGPNSELNIYQYGGGNSALALQADARNSDLTITQHGGGNGADVGQGSDDSSIDLTQRGFGNSATLDQWNGKDSHMTVKQFGGGNGAAVDQTASNSTVNVTQVGFGNNATAHQY</sequence>
<organism>
    <name type="scientific">Escherichia coli O157:H7</name>
    <dbReference type="NCBI Taxonomy" id="83334"/>
    <lineage>
        <taxon>Bacteria</taxon>
        <taxon>Pseudomonadati</taxon>
        <taxon>Pseudomonadota</taxon>
        <taxon>Gammaproteobacteria</taxon>
        <taxon>Enterobacterales</taxon>
        <taxon>Enterobacteriaceae</taxon>
        <taxon>Escherichia</taxon>
    </lineage>
</organism>
<evidence type="ECO:0000250" key="1"/>
<evidence type="ECO:0000305" key="2"/>
<dbReference type="EMBL" id="AF275733">
    <property type="protein sequence ID" value="AAK53212.1"/>
    <property type="molecule type" value="Genomic_DNA"/>
</dbReference>
<dbReference type="EMBL" id="AE005174">
    <property type="protein sequence ID" value="AAG55788.1"/>
    <property type="molecule type" value="Genomic_DNA"/>
</dbReference>
<dbReference type="EMBL" id="BA000007">
    <property type="protein sequence ID" value="BAB34843.1"/>
    <property type="molecule type" value="Genomic_DNA"/>
</dbReference>
<dbReference type="PIR" id="D90806">
    <property type="entry name" value="D90806"/>
</dbReference>
<dbReference type="PIR" id="H85665">
    <property type="entry name" value="H85665"/>
</dbReference>
<dbReference type="RefSeq" id="NP_309447.1">
    <property type="nucleotide sequence ID" value="NC_002695.1"/>
</dbReference>
<dbReference type="RefSeq" id="WP_000771428.1">
    <property type="nucleotide sequence ID" value="NZ_VOAI01000018.1"/>
</dbReference>
<dbReference type="SMR" id="Q93U24"/>
<dbReference type="STRING" id="155864.Z1676"/>
<dbReference type="GeneID" id="75171168"/>
<dbReference type="GeneID" id="913991"/>
<dbReference type="KEGG" id="ece:Z1676"/>
<dbReference type="KEGG" id="ecs:ECs_1420"/>
<dbReference type="PATRIC" id="fig|386585.9.peg.1521"/>
<dbReference type="eggNOG" id="ENOG5030M63">
    <property type="taxonomic scope" value="Bacteria"/>
</dbReference>
<dbReference type="HOGENOM" id="CLU_1861613_0_0_6"/>
<dbReference type="OMA" id="MKLWKIV"/>
<dbReference type="Proteomes" id="UP000000558">
    <property type="component" value="Chromosome"/>
</dbReference>
<dbReference type="Proteomes" id="UP000002519">
    <property type="component" value="Chromosome"/>
</dbReference>
<dbReference type="GO" id="GO:0009289">
    <property type="term" value="C:pilus"/>
    <property type="evidence" value="ECO:0007669"/>
    <property type="project" value="UniProtKB-SubCell"/>
</dbReference>
<dbReference type="GO" id="GO:0007155">
    <property type="term" value="P:cell adhesion"/>
    <property type="evidence" value="ECO:0007669"/>
    <property type="project" value="InterPro"/>
</dbReference>
<dbReference type="InterPro" id="IPR009742">
    <property type="entry name" value="Curlin_rpt"/>
</dbReference>
<dbReference type="NCBIfam" id="NF007470">
    <property type="entry name" value="PRK10051.1"/>
    <property type="match status" value="1"/>
</dbReference>
<dbReference type="Pfam" id="PF07012">
    <property type="entry name" value="Curlin_rpt"/>
    <property type="match status" value="3"/>
</dbReference>
<accession>Q93U24</accession>
<keyword id="KW-0281">Fimbrium</keyword>
<keyword id="KW-1185">Reference proteome</keyword>
<keyword id="KW-0732">Signal</keyword>
<protein>
    <recommendedName>
        <fullName>Major curlin subunit</fullName>
    </recommendedName>
</protein>
<gene>
    <name type="primary">csgA</name>
    <name type="ordered locus">Z1676</name>
    <name type="ordered locus">ECs1420</name>
</gene>